<sequence length="377" mass="41683">MEESEEPADAGQSLPPVYIYSPEYVSVCDSLAKVPKRASMVHSLIEAYALHKQMRIVKPKVASMEEMASFHTDAYLQHLQKVSEDGDDDHPDSIEYGLGYDCPATEGIFDYAAAVGGATITAAQCLIDGMCKVAINWSGGWHHAKKDEASGFCYLNDAVLGILRLRRKFDRILYVDLDLHHGDGVEDAFSFTSKVMTVSLHKFSPGFFPGTGDVSDVGLGKGRYYSVNVPIQDCIQDERYYHICESVLKEVYIAFNPKAVVLQLGADTIAGDPMCSFNMTPVGIGKCLKYILQWELATLILGGGGYNLANTARCWTYLTGVILGKTLSSEIPDHEFFTAYGPDYVLEITPSCRPDRNEPHRVQQILNYIKGNLKHVV</sequence>
<reference key="1">
    <citation type="submission" date="2006-08" db="EMBL/GenBank/DDBJ databases">
        <authorList>
            <consortium name="NIH - Mammalian Gene Collection (MGC) project"/>
        </authorList>
    </citation>
    <scope>NUCLEOTIDE SEQUENCE [LARGE SCALE MRNA]</scope>
    <source>
        <strain>Hereford</strain>
        <tissue>Thymus</tissue>
    </source>
</reference>
<gene>
    <name type="primary">HDAC8</name>
</gene>
<accession>Q0VCB2</accession>
<name>HDAC8_BOVIN</name>
<protein>
    <recommendedName>
        <fullName>Histone deacetylase 8</fullName>
        <shortName>HD8</shortName>
        <ecNumber evidence="1">3.5.1.98</ecNumber>
    </recommendedName>
    <alternativeName>
        <fullName evidence="2">Protein deacetylase HDAC8</fullName>
        <ecNumber evidence="1">3.5.1.-</ecNumber>
    </alternativeName>
    <alternativeName>
        <fullName evidence="2">Protein decrotonylase HDAC8</fullName>
        <ecNumber evidence="1">3.5.1.-</ecNumber>
    </alternativeName>
</protein>
<dbReference type="EC" id="3.5.1.98" evidence="1"/>
<dbReference type="EC" id="3.5.1.-" evidence="1"/>
<dbReference type="EMBL" id="BC120257">
    <property type="protein sequence ID" value="AAI20258.1"/>
    <property type="molecule type" value="mRNA"/>
</dbReference>
<dbReference type="RefSeq" id="NP_001069699.1">
    <property type="nucleotide sequence ID" value="NM_001076231.2"/>
</dbReference>
<dbReference type="SMR" id="Q0VCB2"/>
<dbReference type="FunCoup" id="Q0VCB2">
    <property type="interactions" value="748"/>
</dbReference>
<dbReference type="STRING" id="9913.ENSBTAP00000072222"/>
<dbReference type="PaxDb" id="9913-ENSBTAP00000054707"/>
<dbReference type="GeneID" id="540666"/>
<dbReference type="KEGG" id="bta:540666"/>
<dbReference type="CTD" id="55869"/>
<dbReference type="eggNOG" id="KOG1342">
    <property type="taxonomic scope" value="Eukaryota"/>
</dbReference>
<dbReference type="InParanoid" id="Q0VCB2"/>
<dbReference type="OrthoDB" id="73273at2759"/>
<dbReference type="Proteomes" id="UP000009136">
    <property type="component" value="Unplaced"/>
</dbReference>
<dbReference type="GO" id="GO:0005694">
    <property type="term" value="C:chromosome"/>
    <property type="evidence" value="ECO:0007669"/>
    <property type="project" value="UniProtKB-SubCell"/>
</dbReference>
<dbReference type="GO" id="GO:0005737">
    <property type="term" value="C:cytoplasm"/>
    <property type="evidence" value="ECO:0007669"/>
    <property type="project" value="UniProtKB-SubCell"/>
</dbReference>
<dbReference type="GO" id="GO:0005634">
    <property type="term" value="C:nucleus"/>
    <property type="evidence" value="ECO:0007669"/>
    <property type="project" value="UniProtKB-SubCell"/>
</dbReference>
<dbReference type="GO" id="GO:0004407">
    <property type="term" value="F:histone deacetylase activity"/>
    <property type="evidence" value="ECO:0000250"/>
    <property type="project" value="UniProtKB"/>
</dbReference>
<dbReference type="GO" id="GO:0141221">
    <property type="term" value="F:histone deacetylase activity, hydrolytic mechanism"/>
    <property type="evidence" value="ECO:0007669"/>
    <property type="project" value="UniProtKB-EC"/>
</dbReference>
<dbReference type="GO" id="GO:0160009">
    <property type="term" value="F:histone decrotonylase activity"/>
    <property type="evidence" value="ECO:0000250"/>
    <property type="project" value="UniProtKB"/>
</dbReference>
<dbReference type="GO" id="GO:0046872">
    <property type="term" value="F:metal ion binding"/>
    <property type="evidence" value="ECO:0007669"/>
    <property type="project" value="UniProtKB-KW"/>
</dbReference>
<dbReference type="GO" id="GO:0031507">
    <property type="term" value="P:heterochromatin formation"/>
    <property type="evidence" value="ECO:0000318"/>
    <property type="project" value="GO_Central"/>
</dbReference>
<dbReference type="GO" id="GO:0007064">
    <property type="term" value="P:mitotic sister chromatid cohesion"/>
    <property type="evidence" value="ECO:0000250"/>
    <property type="project" value="UniProtKB"/>
</dbReference>
<dbReference type="CDD" id="cd10000">
    <property type="entry name" value="HDAC8"/>
    <property type="match status" value="1"/>
</dbReference>
<dbReference type="FunFam" id="3.40.800.20:FF:000006">
    <property type="entry name" value="Histone deacetylase 8"/>
    <property type="match status" value="1"/>
</dbReference>
<dbReference type="Gene3D" id="3.40.800.20">
    <property type="entry name" value="Histone deacetylase domain"/>
    <property type="match status" value="1"/>
</dbReference>
<dbReference type="InterPro" id="IPR050284">
    <property type="entry name" value="HDAC_PDAC"/>
</dbReference>
<dbReference type="InterPro" id="IPR000286">
    <property type="entry name" value="His_deacetylse"/>
</dbReference>
<dbReference type="InterPro" id="IPR003084">
    <property type="entry name" value="His_deacetylse_1"/>
</dbReference>
<dbReference type="InterPro" id="IPR023801">
    <property type="entry name" value="His_deacetylse_dom"/>
</dbReference>
<dbReference type="InterPro" id="IPR037138">
    <property type="entry name" value="His_deacetylse_dom_sf"/>
</dbReference>
<dbReference type="InterPro" id="IPR023696">
    <property type="entry name" value="Ureohydrolase_dom_sf"/>
</dbReference>
<dbReference type="PANTHER" id="PTHR10625:SF14">
    <property type="entry name" value="HISTONE DEACETYLASE 8"/>
    <property type="match status" value="1"/>
</dbReference>
<dbReference type="PANTHER" id="PTHR10625">
    <property type="entry name" value="HISTONE DEACETYLASE HDAC1-RELATED"/>
    <property type="match status" value="1"/>
</dbReference>
<dbReference type="Pfam" id="PF00850">
    <property type="entry name" value="Hist_deacetyl"/>
    <property type="match status" value="1"/>
</dbReference>
<dbReference type="PIRSF" id="PIRSF037913">
    <property type="entry name" value="His_deacetylse_1"/>
    <property type="match status" value="1"/>
</dbReference>
<dbReference type="PRINTS" id="PR01270">
    <property type="entry name" value="HDASUPER"/>
</dbReference>
<dbReference type="PRINTS" id="PR01271">
    <property type="entry name" value="HISDACETLASE"/>
</dbReference>
<dbReference type="SUPFAM" id="SSF52768">
    <property type="entry name" value="Arginase/deacetylase"/>
    <property type="match status" value="1"/>
</dbReference>
<comment type="function">
    <text evidence="1">Histone deacetylase that catalyzes the deacetylation of lysine residues on the N-terminal part of the core histones (H2A, H2B, H3 and H4). Histone deacetylation gives a tag for epigenetic repression and plays an important role in transcriptional regulation, cell cycle progression and developmental events. Histone deacetylases act via the formation of large multiprotein complexes. Also involved in the deacetylation of cohesin complex protein SMC3 regulating release of cohesin complexes from chromatin. May play a role in smooth muscle cell contractility. In addition to protein deacetylase activity, also has protein-lysine deacylase activity: acts as a protein decrotonylase by mediating decrotonylation ((2E)-butenoyl) of histones.</text>
</comment>
<comment type="catalytic activity">
    <reaction evidence="1">
        <text>N(6)-acetyl-L-lysyl-[histone] + H2O = L-lysyl-[histone] + acetate</text>
        <dbReference type="Rhea" id="RHEA:58196"/>
        <dbReference type="Rhea" id="RHEA-COMP:9845"/>
        <dbReference type="Rhea" id="RHEA-COMP:11338"/>
        <dbReference type="ChEBI" id="CHEBI:15377"/>
        <dbReference type="ChEBI" id="CHEBI:29969"/>
        <dbReference type="ChEBI" id="CHEBI:30089"/>
        <dbReference type="ChEBI" id="CHEBI:61930"/>
        <dbReference type="EC" id="3.5.1.98"/>
    </reaction>
    <physiologicalReaction direction="left-to-right" evidence="1">
        <dbReference type="Rhea" id="RHEA:58197"/>
    </physiologicalReaction>
</comment>
<comment type="catalytic activity">
    <reaction evidence="1">
        <text>N(6)-acetyl-L-lysyl-[protein] + H2O = L-lysyl-[protein] + acetate</text>
        <dbReference type="Rhea" id="RHEA:58108"/>
        <dbReference type="Rhea" id="RHEA-COMP:9752"/>
        <dbReference type="Rhea" id="RHEA-COMP:10731"/>
        <dbReference type="ChEBI" id="CHEBI:15377"/>
        <dbReference type="ChEBI" id="CHEBI:29969"/>
        <dbReference type="ChEBI" id="CHEBI:30089"/>
        <dbReference type="ChEBI" id="CHEBI:61930"/>
    </reaction>
    <physiologicalReaction direction="left-to-right" evidence="1">
        <dbReference type="Rhea" id="RHEA:58109"/>
    </physiologicalReaction>
</comment>
<comment type="catalytic activity">
    <reaction evidence="1">
        <text>N(6)-(2E)-butenoyl-L-lysyl-[protein] + H2O = (2E)-2-butenoate + L-lysyl-[protein]</text>
        <dbReference type="Rhea" id="RHEA:69172"/>
        <dbReference type="Rhea" id="RHEA-COMP:9752"/>
        <dbReference type="Rhea" id="RHEA-COMP:13707"/>
        <dbReference type="ChEBI" id="CHEBI:15377"/>
        <dbReference type="ChEBI" id="CHEBI:29969"/>
        <dbReference type="ChEBI" id="CHEBI:35899"/>
        <dbReference type="ChEBI" id="CHEBI:137954"/>
    </reaction>
    <physiologicalReaction direction="left-to-right" evidence="1">
        <dbReference type="Rhea" id="RHEA:69173"/>
    </physiologicalReaction>
</comment>
<comment type="cofactor">
    <cofactor evidence="1">
        <name>a divalent metal cation</name>
        <dbReference type="ChEBI" id="CHEBI:60240"/>
    </cofactor>
    <text evidence="1">Binds 1 divalent metal cation per subunit.</text>
</comment>
<comment type="activity regulation">
    <text evidence="1">Its activity is inhibited by trichostatin A (TSA) and butyrate, 2 well known histone deacetylase inhibitors.</text>
</comment>
<comment type="subunit">
    <text evidence="1">Interacts with CBFA2T3 (By similarity). Interacts with phosphorylated SMG5/EST1B; this interaction protects SMG5 from ubiquitin-mediated degradation. Associates with alpha-SMA (smooth muscle alpha-actin).</text>
</comment>
<comment type="subcellular location">
    <subcellularLocation>
        <location evidence="1">Nucleus</location>
    </subcellularLocation>
    <subcellularLocation>
        <location evidence="1">Chromosome</location>
    </subcellularLocation>
    <subcellularLocation>
        <location evidence="1">Cytoplasm</location>
    </subcellularLocation>
    <text evidence="1">Excluded from the nucleoli. Found in the cytoplasm of cells showing smooth muscle differentiation.</text>
</comment>
<comment type="PTM">
    <text evidence="1">Phosphorylated by PKA on serine 39. Phosphorylation reduces deacetylase activity observed preferentially on histones H3 and H4 (By similarity).</text>
</comment>
<comment type="similarity">
    <text evidence="2">Belongs to the histone deacetylase family. HD type 1 subfamily.</text>
</comment>
<proteinExistence type="evidence at transcript level"/>
<keyword id="KW-0156">Chromatin regulator</keyword>
<keyword id="KW-0158">Chromosome</keyword>
<keyword id="KW-0963">Cytoplasm</keyword>
<keyword id="KW-0378">Hydrolase</keyword>
<keyword id="KW-0479">Metal-binding</keyword>
<keyword id="KW-0539">Nucleus</keyword>
<keyword id="KW-0597">Phosphoprotein</keyword>
<keyword id="KW-1185">Reference proteome</keyword>
<keyword id="KW-0678">Repressor</keyword>
<keyword id="KW-0804">Transcription</keyword>
<keyword id="KW-0805">Transcription regulation</keyword>
<feature type="chain" id="PRO_0000389507" description="Histone deacetylase 8">
    <location>
        <begin position="1"/>
        <end position="377"/>
    </location>
</feature>
<feature type="region of interest" description="Histone deacetylase">
    <location>
        <begin position="14"/>
        <end position="324"/>
    </location>
</feature>
<feature type="active site" description="Proton acceptor" evidence="1">
    <location>
        <position position="143"/>
    </location>
</feature>
<feature type="binding site" evidence="1">
    <location>
        <position position="101"/>
    </location>
    <ligand>
        <name>substrate</name>
    </ligand>
</feature>
<feature type="binding site" evidence="1">
    <location>
        <position position="151"/>
    </location>
    <ligand>
        <name>substrate</name>
    </ligand>
</feature>
<feature type="binding site" evidence="1">
    <location>
        <position position="178"/>
    </location>
    <ligand>
        <name>a divalent metal cation</name>
        <dbReference type="ChEBI" id="CHEBI:60240"/>
    </ligand>
</feature>
<feature type="binding site" evidence="1">
    <location>
        <position position="180"/>
    </location>
    <ligand>
        <name>a divalent metal cation</name>
        <dbReference type="ChEBI" id="CHEBI:60240"/>
    </ligand>
</feature>
<feature type="binding site" evidence="1">
    <location>
        <position position="267"/>
    </location>
    <ligand>
        <name>a divalent metal cation</name>
        <dbReference type="ChEBI" id="CHEBI:60240"/>
    </ligand>
</feature>
<feature type="binding site" evidence="1">
    <location>
        <position position="306"/>
    </location>
    <ligand>
        <name>substrate</name>
    </ligand>
</feature>
<feature type="modified residue" description="Phosphoserine" evidence="1">
    <location>
        <position position="39"/>
    </location>
</feature>
<evidence type="ECO:0000250" key="1">
    <source>
        <dbReference type="UniProtKB" id="Q9BY41"/>
    </source>
</evidence>
<evidence type="ECO:0000305" key="2"/>
<organism>
    <name type="scientific">Bos taurus</name>
    <name type="common">Bovine</name>
    <dbReference type="NCBI Taxonomy" id="9913"/>
    <lineage>
        <taxon>Eukaryota</taxon>
        <taxon>Metazoa</taxon>
        <taxon>Chordata</taxon>
        <taxon>Craniata</taxon>
        <taxon>Vertebrata</taxon>
        <taxon>Euteleostomi</taxon>
        <taxon>Mammalia</taxon>
        <taxon>Eutheria</taxon>
        <taxon>Laurasiatheria</taxon>
        <taxon>Artiodactyla</taxon>
        <taxon>Ruminantia</taxon>
        <taxon>Pecora</taxon>
        <taxon>Bovidae</taxon>
        <taxon>Bovinae</taxon>
        <taxon>Bos</taxon>
    </lineage>
</organism>